<protein>
    <recommendedName>
        <fullName evidence="5">Naphthalene 1,2-dioxygenase/salicylate 5-hydroxylase systems, ferredoxin component</fullName>
        <shortName evidence="5">NDO/S5H systems ferredoxin component</shortName>
    </recommendedName>
    <alternativeName>
        <fullName evidence="6">Ferredoxin NagAb</fullName>
    </alternativeName>
</protein>
<geneLocation type="plasmid" evidence="8">
    <name>pWWU2</name>
</geneLocation>
<accession>O52381</accession>
<comment type="function">
    <text evidence="3 4">Component of two multicomponent enzyme systems which are involved in the catabolism of naphthalene (PubMed:11872705, PubMed:9573207). Plays a role as an electron transfer component for both salicylate 5-hydroxylase (S5H) and naphthalene 1,2-dioxygenase (NDO) systems, by transferring electrons to the oxygenase components (PubMed:11872705, PubMed:9573207).</text>
</comment>
<comment type="cofactor">
    <cofactor evidence="1 2">
        <name>[2Fe-2S] cluster</name>
        <dbReference type="ChEBI" id="CHEBI:190135"/>
    </cofactor>
    <text evidence="1 2">Binds 1 [2Fe-2S] cluster per subunit.</text>
</comment>
<comment type="pathway">
    <text evidence="3 4">Aromatic compound metabolism; naphthalene degradation.</text>
</comment>
<comment type="subunit">
    <text evidence="3 4">Ferredoxin NagAb belongs to both the salicylate 5-hydroxylase (S5H) and the naphthalene 1,2-dioxygenase (NDO) multicomponent enzyme systems. The NDO multicomponent enzyme system is composed of an electron transfer component and a dioxygenase component (iron sulfur protein (ISP)). The electron transfer component is composed of a ferredoxin reductase (NagAa) and a ferredoxin (NagAb), and the dioxygenase component is formed by a large alpha subunit (NagAc) and a small beta subunit (NagAd). The S5H multicomponent enzyme system is composed of an electron transfer component and a monooxygenase component. The electron transfer component is composed of a ferredoxin reductase (NagAa) and a ferredoxin (NagAb), and the monooxygenase component is formed by a large subunit (NagG) and a small subunit (NagH).</text>
</comment>
<comment type="disruption phenotype">
    <text evidence="4">Cells lacking this gene are not able to convert salicylate to gentisate.</text>
</comment>
<comment type="similarity">
    <text evidence="7">Belongs to the bacterial ring-hydroxylating dioxygenase ferredoxin component family.</text>
</comment>
<gene>
    <name evidence="6" type="primary">nagAb</name>
</gene>
<keyword id="KW-0001">2Fe-2S</keyword>
<keyword id="KW-0058">Aromatic hydrocarbons catabolism</keyword>
<keyword id="KW-0249">Electron transport</keyword>
<keyword id="KW-0408">Iron</keyword>
<keyword id="KW-0411">Iron-sulfur</keyword>
<keyword id="KW-0479">Metal-binding</keyword>
<keyword id="KW-0614">Plasmid</keyword>
<keyword id="KW-0813">Transport</keyword>
<reference key="1">
    <citation type="journal article" date="1998" name="J. Bacteriol.">
        <title>A gene cluster encoding steps in conversion of naphthalene to gentisate in Pseudomonas sp. strain U2.</title>
        <authorList>
            <person name="Fuenmayor S.L."/>
            <person name="Wild M."/>
            <person name="Boyes A.L."/>
            <person name="Williams P.A."/>
        </authorList>
    </citation>
    <scope>NUCLEOTIDE SEQUENCE [GENOMIC DNA]</scope>
    <scope>FUNCTION</scope>
    <scope>PATHWAY</scope>
    <scope>DISRUPTION PHENOTYPE</scope>
    <scope>SUBUNIT</scope>
    <source>
        <strain evidence="8">U2</strain>
    </source>
</reference>
<reference key="2">
    <citation type="journal article" date="2002" name="J. Bacteriol.">
        <title>Salicylate 5-hydroxylase from Ralstonia sp. strain U2: a monooxygenase with close relationships to and shared electron transport proteins with naphthalene dioxygenase.</title>
        <authorList>
            <person name="Zhou N.Y."/>
            <person name="Al-Dulayymi J."/>
            <person name="Baird M.S."/>
            <person name="Williams P.A."/>
        </authorList>
    </citation>
    <scope>FUNCTION</scope>
    <scope>PATHWAY</scope>
    <scope>SUBUNIT</scope>
    <source>
        <strain>U2</strain>
    </source>
</reference>
<proteinExistence type="evidence at protein level"/>
<organism>
    <name type="scientific">Ralstonia sp</name>
    <dbReference type="NCBI Taxonomy" id="54061"/>
    <lineage>
        <taxon>Bacteria</taxon>
        <taxon>Pseudomonadati</taxon>
        <taxon>Pseudomonadota</taxon>
        <taxon>Betaproteobacteria</taxon>
        <taxon>Burkholderiales</taxon>
        <taxon>Burkholderiaceae</taxon>
        <taxon>Ralstonia</taxon>
    </lineage>
</organism>
<sequence length="104" mass="11565">MTQNWIDAACLDDIPEGDVVGVKVNGKEIALYEVEGEIYATDNLCTHGAARMSDGFLEGREIECPLHQGRFDVCTGKALCTPLTKDIKTYPVKIENMRVMLKME</sequence>
<evidence type="ECO:0000250" key="1">
    <source>
        <dbReference type="UniProtKB" id="P0A185"/>
    </source>
</evidence>
<evidence type="ECO:0000255" key="2">
    <source>
        <dbReference type="PROSITE-ProRule" id="PRU00628"/>
    </source>
</evidence>
<evidence type="ECO:0000269" key="3">
    <source>
    </source>
</evidence>
<evidence type="ECO:0000269" key="4">
    <source>
    </source>
</evidence>
<evidence type="ECO:0000303" key="5">
    <source>
    </source>
</evidence>
<evidence type="ECO:0000303" key="6">
    <source>
    </source>
</evidence>
<evidence type="ECO:0000305" key="7"/>
<evidence type="ECO:0000312" key="8">
    <source>
        <dbReference type="EMBL" id="AAD12609.1"/>
    </source>
</evidence>
<feature type="chain" id="PRO_0000421807" description="Naphthalene 1,2-dioxygenase/salicylate 5-hydroxylase systems, ferredoxin component">
    <location>
        <begin position="1"/>
        <end position="104"/>
    </location>
</feature>
<feature type="domain" description="Rieske" evidence="2">
    <location>
        <begin position="6"/>
        <end position="101"/>
    </location>
</feature>
<feature type="binding site" evidence="1 2">
    <location>
        <position position="45"/>
    </location>
    <ligand>
        <name>[2Fe-2S] cluster</name>
        <dbReference type="ChEBI" id="CHEBI:190135"/>
    </ligand>
</feature>
<feature type="binding site" evidence="1 2">
    <location>
        <position position="47"/>
    </location>
    <ligand>
        <name>[2Fe-2S] cluster</name>
        <dbReference type="ChEBI" id="CHEBI:190135"/>
    </ligand>
</feature>
<feature type="binding site" evidence="1 2">
    <location>
        <position position="64"/>
    </location>
    <ligand>
        <name>[2Fe-2S] cluster</name>
        <dbReference type="ChEBI" id="CHEBI:190135"/>
    </ligand>
</feature>
<feature type="binding site" evidence="1 2">
    <location>
        <position position="67"/>
    </location>
    <ligand>
        <name>[2Fe-2S] cluster</name>
        <dbReference type="ChEBI" id="CHEBI:190135"/>
    </ligand>
</feature>
<name>NAGAB_RALSP</name>
<dbReference type="EMBL" id="AF036940">
    <property type="protein sequence ID" value="AAD12609.1"/>
    <property type="molecule type" value="Genomic_DNA"/>
</dbReference>
<dbReference type="SMR" id="O52381"/>
<dbReference type="UniPathway" id="UPA00082"/>
<dbReference type="GO" id="GO:1902494">
    <property type="term" value="C:catalytic complex"/>
    <property type="evidence" value="ECO:0000314"/>
    <property type="project" value="UniProtKB"/>
</dbReference>
<dbReference type="GO" id="GO:0051537">
    <property type="term" value="F:2 iron, 2 sulfur cluster binding"/>
    <property type="evidence" value="ECO:0007669"/>
    <property type="project" value="UniProtKB-KW"/>
</dbReference>
<dbReference type="GO" id="GO:0046872">
    <property type="term" value="F:metal ion binding"/>
    <property type="evidence" value="ECO:0007669"/>
    <property type="project" value="UniProtKB-KW"/>
</dbReference>
<dbReference type="GO" id="GO:0022900">
    <property type="term" value="P:electron transport chain"/>
    <property type="evidence" value="ECO:0000314"/>
    <property type="project" value="UniProtKB"/>
</dbReference>
<dbReference type="GO" id="GO:1901170">
    <property type="term" value="P:naphthalene catabolic process"/>
    <property type="evidence" value="ECO:0000314"/>
    <property type="project" value="UniProtKB"/>
</dbReference>
<dbReference type="GO" id="GO:0046244">
    <property type="term" value="P:salicylic acid catabolic process"/>
    <property type="evidence" value="ECO:0000314"/>
    <property type="project" value="UniProtKB"/>
</dbReference>
<dbReference type="CDD" id="cd03528">
    <property type="entry name" value="Rieske_RO_ferredoxin"/>
    <property type="match status" value="1"/>
</dbReference>
<dbReference type="FunFam" id="2.102.10.10:FF:000015">
    <property type="entry name" value="Naphthalene 1,2-dioxygenase ferredoxin component"/>
    <property type="match status" value="1"/>
</dbReference>
<dbReference type="Gene3D" id="2.102.10.10">
    <property type="entry name" value="Rieske [2Fe-2S] iron-sulphur domain"/>
    <property type="match status" value="1"/>
</dbReference>
<dbReference type="InterPro" id="IPR017941">
    <property type="entry name" value="Rieske_2Fe-2S"/>
</dbReference>
<dbReference type="InterPro" id="IPR036922">
    <property type="entry name" value="Rieske_2Fe-2S_sf"/>
</dbReference>
<dbReference type="PANTHER" id="PTHR21496">
    <property type="entry name" value="FERREDOXIN-RELATED"/>
    <property type="match status" value="1"/>
</dbReference>
<dbReference type="PANTHER" id="PTHR21496:SF0">
    <property type="entry name" value="RIESKE DOMAIN-CONTAINING PROTEIN"/>
    <property type="match status" value="1"/>
</dbReference>
<dbReference type="Pfam" id="PF00355">
    <property type="entry name" value="Rieske"/>
    <property type="match status" value="1"/>
</dbReference>
<dbReference type="SUPFAM" id="SSF50022">
    <property type="entry name" value="ISP domain"/>
    <property type="match status" value="1"/>
</dbReference>
<dbReference type="PROSITE" id="PS51296">
    <property type="entry name" value="RIESKE"/>
    <property type="match status" value="1"/>
</dbReference>